<gene>
    <name evidence="1" type="primary">msrA</name>
    <name type="ordered locus">AAur_2415</name>
</gene>
<name>MSRA_PAEAT</name>
<organism>
    <name type="scientific">Paenarthrobacter aurescens (strain TC1)</name>
    <dbReference type="NCBI Taxonomy" id="290340"/>
    <lineage>
        <taxon>Bacteria</taxon>
        <taxon>Bacillati</taxon>
        <taxon>Actinomycetota</taxon>
        <taxon>Actinomycetes</taxon>
        <taxon>Micrococcales</taxon>
        <taxon>Micrococcaceae</taxon>
        <taxon>Paenarthrobacter</taxon>
    </lineage>
</organism>
<sequence length="174" mass="19770">MKTFVLGGGCFWCLDAVYQKTRGVSSVVSGYTGGHVRNPDYYEVCSGTTGHAEVVAVTFDETVVPEEVILDMFFALHDPTTLNRQGYDVGTQYRSSMFYTTTEEKVLFEEAIERAQALWSDPIVTEVSRLPEFHEAEEVHQNYYAKFPYQGYCQVIINPKLAKARKYYSAWLTA</sequence>
<dbReference type="EC" id="1.8.4.11" evidence="1"/>
<dbReference type="EMBL" id="CP000474">
    <property type="protein sequence ID" value="ABM09216.1"/>
    <property type="molecule type" value="Genomic_DNA"/>
</dbReference>
<dbReference type="RefSeq" id="WP_011775087.1">
    <property type="nucleotide sequence ID" value="NC_008711.1"/>
</dbReference>
<dbReference type="SMR" id="A1R7D2"/>
<dbReference type="STRING" id="290340.AAur_2415"/>
<dbReference type="KEGG" id="aau:AAur_2415"/>
<dbReference type="eggNOG" id="COG0225">
    <property type="taxonomic scope" value="Bacteria"/>
</dbReference>
<dbReference type="HOGENOM" id="CLU_031040_10_0_11"/>
<dbReference type="OrthoDB" id="4174719at2"/>
<dbReference type="Proteomes" id="UP000000637">
    <property type="component" value="Chromosome"/>
</dbReference>
<dbReference type="GO" id="GO:0033744">
    <property type="term" value="F:L-methionine:thioredoxin-disulfide S-oxidoreductase activity"/>
    <property type="evidence" value="ECO:0007669"/>
    <property type="project" value="RHEA"/>
</dbReference>
<dbReference type="GO" id="GO:0008113">
    <property type="term" value="F:peptide-methionine (S)-S-oxide reductase activity"/>
    <property type="evidence" value="ECO:0007669"/>
    <property type="project" value="UniProtKB-UniRule"/>
</dbReference>
<dbReference type="GO" id="GO:0036211">
    <property type="term" value="P:protein modification process"/>
    <property type="evidence" value="ECO:0007669"/>
    <property type="project" value="UniProtKB-UniRule"/>
</dbReference>
<dbReference type="Gene3D" id="3.30.1060.10">
    <property type="entry name" value="Peptide methionine sulphoxide reductase MsrA"/>
    <property type="match status" value="1"/>
</dbReference>
<dbReference type="HAMAP" id="MF_01401">
    <property type="entry name" value="MsrA"/>
    <property type="match status" value="1"/>
</dbReference>
<dbReference type="InterPro" id="IPR002569">
    <property type="entry name" value="Met_Sox_Rdtase_MsrA_dom"/>
</dbReference>
<dbReference type="InterPro" id="IPR036509">
    <property type="entry name" value="Met_Sox_Rdtase_MsrA_sf"/>
</dbReference>
<dbReference type="NCBIfam" id="TIGR00401">
    <property type="entry name" value="msrA"/>
    <property type="match status" value="1"/>
</dbReference>
<dbReference type="PANTHER" id="PTHR43774">
    <property type="entry name" value="PEPTIDE METHIONINE SULFOXIDE REDUCTASE"/>
    <property type="match status" value="1"/>
</dbReference>
<dbReference type="PANTHER" id="PTHR43774:SF1">
    <property type="entry name" value="PEPTIDE METHIONINE SULFOXIDE REDUCTASE MSRA 2"/>
    <property type="match status" value="1"/>
</dbReference>
<dbReference type="Pfam" id="PF01625">
    <property type="entry name" value="PMSR"/>
    <property type="match status" value="1"/>
</dbReference>
<dbReference type="SUPFAM" id="SSF55068">
    <property type="entry name" value="Peptide methionine sulfoxide reductase"/>
    <property type="match status" value="1"/>
</dbReference>
<comment type="function">
    <text evidence="1">Has an important function as a repair enzyme for proteins that have been inactivated by oxidation. Catalyzes the reversible oxidation-reduction of methionine sulfoxide in proteins to methionine.</text>
</comment>
<comment type="catalytic activity">
    <reaction evidence="1">
        <text>L-methionyl-[protein] + [thioredoxin]-disulfide + H2O = L-methionyl-(S)-S-oxide-[protein] + [thioredoxin]-dithiol</text>
        <dbReference type="Rhea" id="RHEA:14217"/>
        <dbReference type="Rhea" id="RHEA-COMP:10698"/>
        <dbReference type="Rhea" id="RHEA-COMP:10700"/>
        <dbReference type="Rhea" id="RHEA-COMP:12313"/>
        <dbReference type="Rhea" id="RHEA-COMP:12315"/>
        <dbReference type="ChEBI" id="CHEBI:15377"/>
        <dbReference type="ChEBI" id="CHEBI:16044"/>
        <dbReference type="ChEBI" id="CHEBI:29950"/>
        <dbReference type="ChEBI" id="CHEBI:44120"/>
        <dbReference type="ChEBI" id="CHEBI:50058"/>
        <dbReference type="EC" id="1.8.4.11"/>
    </reaction>
</comment>
<comment type="catalytic activity">
    <reaction evidence="1">
        <text>[thioredoxin]-disulfide + L-methionine + H2O = L-methionine (S)-S-oxide + [thioredoxin]-dithiol</text>
        <dbReference type="Rhea" id="RHEA:19993"/>
        <dbReference type="Rhea" id="RHEA-COMP:10698"/>
        <dbReference type="Rhea" id="RHEA-COMP:10700"/>
        <dbReference type="ChEBI" id="CHEBI:15377"/>
        <dbReference type="ChEBI" id="CHEBI:29950"/>
        <dbReference type="ChEBI" id="CHEBI:50058"/>
        <dbReference type="ChEBI" id="CHEBI:57844"/>
        <dbReference type="ChEBI" id="CHEBI:58772"/>
        <dbReference type="EC" id="1.8.4.11"/>
    </reaction>
</comment>
<comment type="similarity">
    <text evidence="1">Belongs to the MsrA Met sulfoxide reductase family.</text>
</comment>
<evidence type="ECO:0000255" key="1">
    <source>
        <dbReference type="HAMAP-Rule" id="MF_01401"/>
    </source>
</evidence>
<feature type="chain" id="PRO_1000068307" description="Peptide methionine sulfoxide reductase MsrA">
    <location>
        <begin position="1"/>
        <end position="174"/>
    </location>
</feature>
<feature type="active site" evidence="1">
    <location>
        <position position="10"/>
    </location>
</feature>
<accession>A1R7D2</accession>
<keyword id="KW-0560">Oxidoreductase</keyword>
<proteinExistence type="inferred from homology"/>
<protein>
    <recommendedName>
        <fullName evidence="1">Peptide methionine sulfoxide reductase MsrA</fullName>
        <shortName evidence="1">Protein-methionine-S-oxide reductase</shortName>
        <ecNumber evidence="1">1.8.4.11</ecNumber>
    </recommendedName>
    <alternativeName>
        <fullName evidence="1">Peptide-methionine (S)-S-oxide reductase</fullName>
        <shortName evidence="1">Peptide Met(O) reductase</shortName>
    </alternativeName>
</protein>
<reference key="1">
    <citation type="journal article" date="2006" name="PLoS Genet.">
        <title>Secrets of soil survival revealed by the genome sequence of Arthrobacter aurescens TC1.</title>
        <authorList>
            <person name="Mongodin E.F."/>
            <person name="Shapir N."/>
            <person name="Daugherty S.C."/>
            <person name="DeBoy R.T."/>
            <person name="Emerson J.B."/>
            <person name="Shvartzbeyn A."/>
            <person name="Radune D."/>
            <person name="Vamathevan J."/>
            <person name="Riggs F."/>
            <person name="Grinberg V."/>
            <person name="Khouri H.M."/>
            <person name="Wackett L.P."/>
            <person name="Nelson K.E."/>
            <person name="Sadowsky M.J."/>
        </authorList>
    </citation>
    <scope>NUCLEOTIDE SEQUENCE [LARGE SCALE GENOMIC DNA]</scope>
    <source>
        <strain>TC1</strain>
    </source>
</reference>